<sequence length="151" mass="16129">MKRNNKSAIALIALSLLALSSGAAFAGHHWGNNDGMWQQGGSPLTTEQQATAQKIYDDYYTQTSALRQQLISKRYEYNALLTASSPDTAKINAVAKEMESLGQKLDEQRVKRDVAMAQAGIPRGAGMGYGGCGGYGGGYHRGGGHMGMGNW</sequence>
<feature type="signal peptide" evidence="2">
    <location>
        <begin position="1"/>
        <end position="26"/>
    </location>
</feature>
<feature type="chain" id="PRO_0000022722" description="Signaling pathway modulator ZraP">
    <location>
        <begin position="27"/>
        <end position="151"/>
    </location>
</feature>
<feature type="helix" evidence="9">
    <location>
        <begin position="46"/>
        <end position="81"/>
    </location>
</feature>
<feature type="strand" evidence="9">
    <location>
        <begin position="83"/>
        <end position="85"/>
    </location>
</feature>
<feature type="helix" evidence="9">
    <location>
        <begin position="88"/>
        <end position="118"/>
    </location>
</feature>
<keyword id="KW-0002">3D-structure</keyword>
<keyword id="KW-0574">Periplasm</keyword>
<keyword id="KW-1185">Reference proteome</keyword>
<keyword id="KW-0732">Signal</keyword>
<keyword id="KW-0346">Stress response</keyword>
<keyword id="KW-0862">Zinc</keyword>
<comment type="function">
    <text evidence="1 3 7">Part of the Zra signaling pathway, an envelope stress response (ESR) system composed of the periplasmic accessory protein ZraP, the histidine kinase ZraS and the transcriptional regulator ZraR (PubMed:22084975). The ZraPSR system contributes to antibiotic resistance and is important for membrane integrity in the presence of membrane-targeting biocides (By similarity). ZraP acts as a modulator which has both a regulatory and a chaperone function (PubMed:22084975). The zinc-bound form of ZraP modulates the response of the ZraPSR system by inhibiting the expression of the zra genes, probably by interacting with ZraS (Probable). Also displays zinc-dependent ATP-independent chaperone activity in vitro and protects malate dehydrogenase (MDH) from thermal aggregation and denaturation (PubMed:22084975).</text>
</comment>
<comment type="activity regulation">
    <text evidence="3">Chaperone activity is enhanced by zinc and inhibited in the presence of EDTA.</text>
</comment>
<comment type="subunit">
    <text evidence="3 4">Forms oligomers (PubMed:22084975, Ref.3). Stabilization of high-order structures requires zinc (PubMed:22084975).</text>
</comment>
<comment type="subcellular location">
    <subcellularLocation>
        <location evidence="1">Periplasm</location>
    </subcellularLocation>
</comment>
<comment type="induction">
    <text evidence="3">Expression is induced by indole (PubMed:22084975). Expression is regulated by the ZraSR two-component system (PubMed:22084975).</text>
</comment>
<comment type="disruption phenotype">
    <text evidence="3">Mutation does not affect growth or survival rate, but mutant is significantly more sensitive to polymyxin B.</text>
</comment>
<comment type="similarity">
    <text evidence="6">Belongs to the ZraP family.</text>
</comment>
<accession>Q9L9I0</accession>
<gene>
    <name evidence="5" type="primary">zraP</name>
    <name type="ordered locus">STM4172</name>
    <name type="ORF">STMF1.61</name>
</gene>
<reference key="1">
    <citation type="journal article" date="2001" name="Nature">
        <title>Complete genome sequence of Salmonella enterica serovar Typhimurium LT2.</title>
        <authorList>
            <person name="McClelland M."/>
            <person name="Sanderson K.E."/>
            <person name="Spieth J."/>
            <person name="Clifton S.W."/>
            <person name="Latreille P."/>
            <person name="Courtney L."/>
            <person name="Porwollik S."/>
            <person name="Ali J."/>
            <person name="Dante M."/>
            <person name="Du F."/>
            <person name="Hou S."/>
            <person name="Layman D."/>
            <person name="Leonard S."/>
            <person name="Nguyen C."/>
            <person name="Scott K."/>
            <person name="Holmes A."/>
            <person name="Grewal N."/>
            <person name="Mulvaney E."/>
            <person name="Ryan E."/>
            <person name="Sun H."/>
            <person name="Florea L."/>
            <person name="Miller W."/>
            <person name="Stoneking T."/>
            <person name="Nhan M."/>
            <person name="Waterston R."/>
            <person name="Wilson R.K."/>
        </authorList>
    </citation>
    <scope>NUCLEOTIDE SEQUENCE [LARGE SCALE GENOMIC DNA]</scope>
    <source>
        <strain>LT2 / SGSC1412 / ATCC 700720</strain>
    </source>
</reference>
<reference key="2">
    <citation type="journal article" date="2012" name="Biochem. J.">
        <title>ZraP is a periplasmic molecular chaperone and a repressor of the zinc-responsive two-component regulator ZraSR.</title>
        <authorList>
            <person name="Appia-Ayme C."/>
            <person name="Hall A."/>
            <person name="Patrick E."/>
            <person name="Rajadurai S."/>
            <person name="Clarke T.A."/>
            <person name="Rowley G."/>
        </authorList>
    </citation>
    <scope>FUNCTION</scope>
    <scope>ACTIVITY REGULATION</scope>
    <scope>SUBUNIT</scope>
    <scope>INDUCTION</scope>
    <scope>DISRUPTION PHENOTYPE</scope>
    <source>
        <strain>SL1344</strain>
    </source>
</reference>
<reference evidence="8" key="3">
    <citation type="submission" date="2010-01" db="PDB data bank">
        <title>Alpha-Helical barrel formed by the decamer of the zinc resistance-associated protein (STM4172) from Salmonella enterica subsp. enterica serovar Typhimurium str. LT2.</title>
        <authorList>
            <person name="Filippova E.V."/>
            <person name="Minasov G."/>
            <person name="Shuvalova L."/>
            <person name="Winsor J."/>
            <person name="Dubrovska I."/>
            <person name="Papazisi L."/>
            <person name="Anderson W.F."/>
        </authorList>
    </citation>
    <scope>X-RAY CRYSTALLOGRAPHY (2.70 ANGSTROMS) OF 44-122</scope>
    <scope>SUBUNIT</scope>
    <source>
        <strain>LT2</strain>
    </source>
</reference>
<dbReference type="EMBL" id="AF170176">
    <property type="protein sequence ID" value="AAF33522.1"/>
    <property type="molecule type" value="Genomic_DNA"/>
</dbReference>
<dbReference type="EMBL" id="AE006468">
    <property type="protein sequence ID" value="AAL23000.1"/>
    <property type="molecule type" value="Genomic_DNA"/>
</dbReference>
<dbReference type="RefSeq" id="NP_463041.1">
    <property type="nucleotide sequence ID" value="NC_003197.2"/>
</dbReference>
<dbReference type="RefSeq" id="WP_000828129.1">
    <property type="nucleotide sequence ID" value="NC_003197.2"/>
</dbReference>
<dbReference type="PDB" id="3LAY">
    <property type="method" value="X-ray"/>
    <property type="resolution" value="2.70 A"/>
    <property type="chains" value="A/B/C/D/E/F/G/H/I/J=44-122"/>
</dbReference>
<dbReference type="PDBsum" id="3LAY"/>
<dbReference type="SMR" id="Q9L9I0"/>
<dbReference type="STRING" id="99287.STM4172"/>
<dbReference type="PaxDb" id="99287-STM4172"/>
<dbReference type="GeneID" id="1255698"/>
<dbReference type="KEGG" id="stm:STM4172"/>
<dbReference type="PATRIC" id="fig|99287.12.peg.4386"/>
<dbReference type="HOGENOM" id="CLU_124884_0_0_6"/>
<dbReference type="OMA" id="GMGYGDC"/>
<dbReference type="PhylomeDB" id="Q9L9I0"/>
<dbReference type="BioCyc" id="SENT99287:STM4172-MONOMER"/>
<dbReference type="EvolutionaryTrace" id="Q9L9I0"/>
<dbReference type="Proteomes" id="UP000001014">
    <property type="component" value="Chromosome"/>
</dbReference>
<dbReference type="GO" id="GO:0042597">
    <property type="term" value="C:periplasmic space"/>
    <property type="evidence" value="ECO:0007669"/>
    <property type="project" value="UniProtKB-SubCell"/>
</dbReference>
<dbReference type="GO" id="GO:0008270">
    <property type="term" value="F:zinc ion binding"/>
    <property type="evidence" value="ECO:0000269"/>
    <property type="project" value="DisProt"/>
</dbReference>
<dbReference type="DisProt" id="DP00861"/>
<dbReference type="Gene3D" id="1.20.120.1490">
    <property type="match status" value="1"/>
</dbReference>
<dbReference type="InterPro" id="IPR025961">
    <property type="entry name" value="Metal_resist"/>
</dbReference>
<dbReference type="NCBIfam" id="NF008584">
    <property type="entry name" value="PRK11546.1"/>
    <property type="match status" value="1"/>
</dbReference>
<dbReference type="Pfam" id="PF13801">
    <property type="entry name" value="Metal_resist"/>
    <property type="match status" value="1"/>
</dbReference>
<proteinExistence type="evidence at protein level"/>
<protein>
    <recommendedName>
        <fullName evidence="6">Signaling pathway modulator ZraP</fullName>
    </recommendedName>
    <alternativeName>
        <fullName>Zinc resistance-associated protein</fullName>
    </alternativeName>
</protein>
<name>ZRAP_SALTY</name>
<organism>
    <name type="scientific">Salmonella typhimurium (strain LT2 / SGSC1412 / ATCC 700720)</name>
    <dbReference type="NCBI Taxonomy" id="99287"/>
    <lineage>
        <taxon>Bacteria</taxon>
        <taxon>Pseudomonadati</taxon>
        <taxon>Pseudomonadota</taxon>
        <taxon>Gammaproteobacteria</taxon>
        <taxon>Enterobacterales</taxon>
        <taxon>Enterobacteriaceae</taxon>
        <taxon>Salmonella</taxon>
    </lineage>
</organism>
<evidence type="ECO:0000250" key="1">
    <source>
        <dbReference type="UniProtKB" id="P0AAA9"/>
    </source>
</evidence>
<evidence type="ECO:0000255" key="2"/>
<evidence type="ECO:0000269" key="3">
    <source>
    </source>
</evidence>
<evidence type="ECO:0000269" key="4">
    <source ref="3"/>
</evidence>
<evidence type="ECO:0000303" key="5">
    <source>
    </source>
</evidence>
<evidence type="ECO:0000305" key="6"/>
<evidence type="ECO:0000305" key="7">
    <source>
    </source>
</evidence>
<evidence type="ECO:0007744" key="8">
    <source>
        <dbReference type="PDB" id="3LAY"/>
    </source>
</evidence>
<evidence type="ECO:0007829" key="9">
    <source>
        <dbReference type="PDB" id="3LAY"/>
    </source>
</evidence>